<keyword id="KW-0963">Cytoplasm</keyword>
<keyword id="KW-0479">Metal-binding</keyword>
<keyword id="KW-0520">NAD</keyword>
<keyword id="KW-0808">Transferase</keyword>
<keyword id="KW-0862">Zinc</keyword>
<feature type="chain" id="PRO_0000110323" description="NAD-dependent protein deacylase">
    <location>
        <begin position="1"/>
        <end position="246"/>
    </location>
</feature>
<feature type="domain" description="Deacetylase sirtuin-type" evidence="2">
    <location>
        <begin position="1"/>
        <end position="245"/>
    </location>
</feature>
<feature type="active site" description="Proton acceptor" evidence="2">
    <location>
        <position position="116"/>
    </location>
</feature>
<feature type="binding site" evidence="1">
    <location>
        <begin position="20"/>
        <end position="39"/>
    </location>
    <ligand>
        <name>NAD(+)</name>
        <dbReference type="ChEBI" id="CHEBI:57540"/>
    </ligand>
</feature>
<feature type="binding site" evidence="1">
    <location>
        <position position="64"/>
    </location>
    <ligand>
        <name>substrate</name>
    </ligand>
</feature>
<feature type="binding site" evidence="1">
    <location>
        <position position="67"/>
    </location>
    <ligand>
        <name>substrate</name>
    </ligand>
</feature>
<feature type="binding site" evidence="1">
    <location>
        <begin position="98"/>
        <end position="101"/>
    </location>
    <ligand>
        <name>NAD(+)</name>
        <dbReference type="ChEBI" id="CHEBI:57540"/>
    </ligand>
</feature>
<feature type="binding site" evidence="1">
    <location>
        <position position="124"/>
    </location>
    <ligand>
        <name>Zn(2+)</name>
        <dbReference type="ChEBI" id="CHEBI:29105"/>
    </ligand>
</feature>
<feature type="binding site" evidence="1">
    <location>
        <position position="127"/>
    </location>
    <ligand>
        <name>Zn(2+)</name>
        <dbReference type="ChEBI" id="CHEBI:29105"/>
    </ligand>
</feature>
<feature type="binding site" evidence="1">
    <location>
        <position position="146"/>
    </location>
    <ligand>
        <name>Zn(2+)</name>
        <dbReference type="ChEBI" id="CHEBI:29105"/>
    </ligand>
</feature>
<feature type="binding site" evidence="1">
    <location>
        <position position="149"/>
    </location>
    <ligand>
        <name>Zn(2+)</name>
        <dbReference type="ChEBI" id="CHEBI:29105"/>
    </ligand>
</feature>
<feature type="binding site" evidence="1">
    <location>
        <begin position="186"/>
        <end position="188"/>
    </location>
    <ligand>
        <name>NAD(+)</name>
        <dbReference type="ChEBI" id="CHEBI:57540"/>
    </ligand>
</feature>
<feature type="binding site" evidence="1">
    <location>
        <begin position="212"/>
        <end position="214"/>
    </location>
    <ligand>
        <name>NAD(+)</name>
        <dbReference type="ChEBI" id="CHEBI:57540"/>
    </ligand>
</feature>
<feature type="binding site" evidence="1">
    <location>
        <position position="230"/>
    </location>
    <ligand>
        <name>NAD(+)</name>
        <dbReference type="ChEBI" id="CHEBI:57540"/>
    </ligand>
</feature>
<accession>Q72RR0</accession>
<evidence type="ECO:0000255" key="1">
    <source>
        <dbReference type="HAMAP-Rule" id="MF_01121"/>
    </source>
</evidence>
<evidence type="ECO:0000255" key="2">
    <source>
        <dbReference type="PROSITE-ProRule" id="PRU00236"/>
    </source>
</evidence>
<proteinExistence type="inferred from homology"/>
<sequence length="246" mass="27683">MKEFITKHRDKFQKISAISGAGISAESGIPTFRGSEGLWKNFRAEDLATPQAFSKNPKLVWEWYLWRRNIIETKRPNPGHFALVELERIHPDFFLITQNVDGLHSQAGSKKLTEIHGNIFINRCISCGQESKETISENTTPLPPQCQNCNSFLRPGVVWFGESYDDFKLNFSIQRMKHTDLLLVLGTSGSVSMPVYLAQIAKDSGALLVEINPERSSFSSSVDLFLQGKTGEVLPELIREILDNPS</sequence>
<reference key="1">
    <citation type="journal article" date="2004" name="J. Bacteriol.">
        <title>Comparative genomics of two Leptospira interrogans serovars reveals novel insights into physiology and pathogenesis.</title>
        <authorList>
            <person name="Nascimento A.L.T.O."/>
            <person name="Ko A.I."/>
            <person name="Martins E.A.L."/>
            <person name="Monteiro-Vitorello C.B."/>
            <person name="Ho P.L."/>
            <person name="Haake D.A."/>
            <person name="Verjovski-Almeida S."/>
            <person name="Hartskeerl R.A."/>
            <person name="Marques M.V."/>
            <person name="Oliveira M.C."/>
            <person name="Menck C.F.M."/>
            <person name="Leite L.C.C."/>
            <person name="Carrer H."/>
            <person name="Coutinho L.L."/>
            <person name="Degrave W.M."/>
            <person name="Dellagostin O.A."/>
            <person name="El-Dorry H."/>
            <person name="Ferro E.S."/>
            <person name="Ferro M.I.T."/>
            <person name="Furlan L.R."/>
            <person name="Gamberini M."/>
            <person name="Giglioti E.A."/>
            <person name="Goes-Neto A."/>
            <person name="Goldman G.H."/>
            <person name="Goldman M.H.S."/>
            <person name="Harakava R."/>
            <person name="Jeronimo S.M.B."/>
            <person name="Junqueira-de-Azevedo I.L.M."/>
            <person name="Kimura E.T."/>
            <person name="Kuramae E.E."/>
            <person name="Lemos E.G.M."/>
            <person name="Lemos M.V.F."/>
            <person name="Marino C.L."/>
            <person name="Nunes L.R."/>
            <person name="de Oliveira R.C."/>
            <person name="Pereira G.G."/>
            <person name="Reis M.S."/>
            <person name="Schriefer A."/>
            <person name="Siqueira W.J."/>
            <person name="Sommer P."/>
            <person name="Tsai S.M."/>
            <person name="Simpson A.J.G."/>
            <person name="Ferro J.A."/>
            <person name="Camargo L.E.A."/>
            <person name="Kitajima J.P."/>
            <person name="Setubal J.C."/>
            <person name="Van Sluys M.A."/>
        </authorList>
    </citation>
    <scope>NUCLEOTIDE SEQUENCE [LARGE SCALE GENOMIC DNA]</scope>
    <source>
        <strain>Fiocruz L1-130</strain>
    </source>
</reference>
<dbReference type="EC" id="2.3.1.286" evidence="1 2"/>
<dbReference type="EMBL" id="AE016823">
    <property type="protein sequence ID" value="AAS70273.1"/>
    <property type="molecule type" value="Genomic_DNA"/>
</dbReference>
<dbReference type="RefSeq" id="WP_000657518.1">
    <property type="nucleotide sequence ID" value="NC_005823.1"/>
</dbReference>
<dbReference type="SMR" id="Q72RR0"/>
<dbReference type="KEGG" id="lic:LIC_11684"/>
<dbReference type="HOGENOM" id="CLU_023643_3_1_12"/>
<dbReference type="Proteomes" id="UP000007037">
    <property type="component" value="Chromosome I"/>
</dbReference>
<dbReference type="GO" id="GO:0005737">
    <property type="term" value="C:cytoplasm"/>
    <property type="evidence" value="ECO:0007669"/>
    <property type="project" value="UniProtKB-SubCell"/>
</dbReference>
<dbReference type="GO" id="GO:0017136">
    <property type="term" value="F:histone deacetylase activity, NAD-dependent"/>
    <property type="evidence" value="ECO:0007669"/>
    <property type="project" value="TreeGrafter"/>
</dbReference>
<dbReference type="GO" id="GO:0070403">
    <property type="term" value="F:NAD+ binding"/>
    <property type="evidence" value="ECO:0007669"/>
    <property type="project" value="UniProtKB-UniRule"/>
</dbReference>
<dbReference type="GO" id="GO:0036054">
    <property type="term" value="F:protein-malonyllysine demalonylase activity"/>
    <property type="evidence" value="ECO:0007669"/>
    <property type="project" value="InterPro"/>
</dbReference>
<dbReference type="GO" id="GO:0036055">
    <property type="term" value="F:protein-succinyllysine desuccinylase activity"/>
    <property type="evidence" value="ECO:0007669"/>
    <property type="project" value="UniProtKB-UniRule"/>
</dbReference>
<dbReference type="GO" id="GO:0008270">
    <property type="term" value="F:zinc ion binding"/>
    <property type="evidence" value="ECO:0007669"/>
    <property type="project" value="UniProtKB-UniRule"/>
</dbReference>
<dbReference type="CDD" id="cd01412">
    <property type="entry name" value="SIRT5_Af1_CobB"/>
    <property type="match status" value="1"/>
</dbReference>
<dbReference type="Gene3D" id="3.30.1600.10">
    <property type="entry name" value="SIR2/SIRT2 'Small Domain"/>
    <property type="match status" value="1"/>
</dbReference>
<dbReference type="Gene3D" id="3.40.50.1220">
    <property type="entry name" value="TPP-binding domain"/>
    <property type="match status" value="1"/>
</dbReference>
<dbReference type="HAMAP" id="MF_01121">
    <property type="entry name" value="Sirtuin_ClassIII"/>
    <property type="match status" value="1"/>
</dbReference>
<dbReference type="InterPro" id="IPR029035">
    <property type="entry name" value="DHS-like_NAD/FAD-binding_dom"/>
</dbReference>
<dbReference type="InterPro" id="IPR050134">
    <property type="entry name" value="NAD-dep_sirtuin_deacylases"/>
</dbReference>
<dbReference type="InterPro" id="IPR003000">
    <property type="entry name" value="Sirtuin"/>
</dbReference>
<dbReference type="InterPro" id="IPR026591">
    <property type="entry name" value="Sirtuin_cat_small_dom_sf"/>
</dbReference>
<dbReference type="InterPro" id="IPR027546">
    <property type="entry name" value="Sirtuin_class_III"/>
</dbReference>
<dbReference type="InterPro" id="IPR026590">
    <property type="entry name" value="Ssirtuin_cat_dom"/>
</dbReference>
<dbReference type="NCBIfam" id="NF001753">
    <property type="entry name" value="PRK00481.1-3"/>
    <property type="match status" value="1"/>
</dbReference>
<dbReference type="PANTHER" id="PTHR11085:SF4">
    <property type="entry name" value="NAD-DEPENDENT PROTEIN DEACYLASE"/>
    <property type="match status" value="1"/>
</dbReference>
<dbReference type="PANTHER" id="PTHR11085">
    <property type="entry name" value="NAD-DEPENDENT PROTEIN DEACYLASE SIRTUIN-5, MITOCHONDRIAL-RELATED"/>
    <property type="match status" value="1"/>
</dbReference>
<dbReference type="Pfam" id="PF02146">
    <property type="entry name" value="SIR2"/>
    <property type="match status" value="1"/>
</dbReference>
<dbReference type="SUPFAM" id="SSF52467">
    <property type="entry name" value="DHS-like NAD/FAD-binding domain"/>
    <property type="match status" value="1"/>
</dbReference>
<dbReference type="PROSITE" id="PS50305">
    <property type="entry name" value="SIRTUIN"/>
    <property type="match status" value="1"/>
</dbReference>
<organism>
    <name type="scientific">Leptospira interrogans serogroup Icterohaemorrhagiae serovar copenhageni (strain Fiocruz L1-130)</name>
    <dbReference type="NCBI Taxonomy" id="267671"/>
    <lineage>
        <taxon>Bacteria</taxon>
        <taxon>Pseudomonadati</taxon>
        <taxon>Spirochaetota</taxon>
        <taxon>Spirochaetia</taxon>
        <taxon>Leptospirales</taxon>
        <taxon>Leptospiraceae</taxon>
        <taxon>Leptospira</taxon>
    </lineage>
</organism>
<protein>
    <recommendedName>
        <fullName evidence="1">NAD-dependent protein deacylase</fullName>
        <ecNumber evidence="1 2">2.3.1.286</ecNumber>
    </recommendedName>
    <alternativeName>
        <fullName evidence="1">Regulatory protein SIR2 homolog</fullName>
    </alternativeName>
</protein>
<gene>
    <name evidence="1" type="primary">cobB</name>
    <name type="ordered locus">LIC_11684</name>
</gene>
<comment type="function">
    <text evidence="1">NAD-dependent lysine deacetylase and desuccinylase that specifically removes acetyl and succinyl groups on target proteins. Modulates the activities of several proteins which are inactive in their acylated form.</text>
</comment>
<comment type="catalytic activity">
    <reaction evidence="1">
        <text>N(6)-acetyl-L-lysyl-[protein] + NAD(+) + H2O = 2''-O-acetyl-ADP-D-ribose + nicotinamide + L-lysyl-[protein]</text>
        <dbReference type="Rhea" id="RHEA:43636"/>
        <dbReference type="Rhea" id="RHEA-COMP:9752"/>
        <dbReference type="Rhea" id="RHEA-COMP:10731"/>
        <dbReference type="ChEBI" id="CHEBI:15377"/>
        <dbReference type="ChEBI" id="CHEBI:17154"/>
        <dbReference type="ChEBI" id="CHEBI:29969"/>
        <dbReference type="ChEBI" id="CHEBI:57540"/>
        <dbReference type="ChEBI" id="CHEBI:61930"/>
        <dbReference type="ChEBI" id="CHEBI:83767"/>
        <dbReference type="EC" id="2.3.1.286"/>
    </reaction>
</comment>
<comment type="catalytic activity">
    <reaction evidence="1">
        <text>N(6)-succinyl-L-lysyl-[protein] + NAD(+) + H2O = 2''-O-succinyl-ADP-D-ribose + nicotinamide + L-lysyl-[protein]</text>
        <dbReference type="Rhea" id="RHEA:47668"/>
        <dbReference type="Rhea" id="RHEA-COMP:9752"/>
        <dbReference type="Rhea" id="RHEA-COMP:11877"/>
        <dbReference type="ChEBI" id="CHEBI:15377"/>
        <dbReference type="ChEBI" id="CHEBI:17154"/>
        <dbReference type="ChEBI" id="CHEBI:29969"/>
        <dbReference type="ChEBI" id="CHEBI:57540"/>
        <dbReference type="ChEBI" id="CHEBI:87830"/>
        <dbReference type="ChEBI" id="CHEBI:87832"/>
    </reaction>
</comment>
<comment type="cofactor">
    <cofactor evidence="1">
        <name>Zn(2+)</name>
        <dbReference type="ChEBI" id="CHEBI:29105"/>
    </cofactor>
    <text evidence="1">Binds 1 zinc ion per subunit.</text>
</comment>
<comment type="subcellular location">
    <subcellularLocation>
        <location evidence="1">Cytoplasm</location>
    </subcellularLocation>
</comment>
<comment type="domain">
    <text evidence="1">2 residues (Tyr-64 and Arg-67) present in a large hydrophobic pocket are probably involved in substrate specificity. They are important for desuccinylation activity, but dispensable for deacetylation activity.</text>
</comment>
<comment type="similarity">
    <text evidence="1">Belongs to the sirtuin family. Class III subfamily.</text>
</comment>
<name>NPD_LEPIC</name>